<gene>
    <name evidence="1" type="primary">rplW</name>
    <name type="ordered locus">SF3350</name>
    <name type="ordered locus">S4412</name>
</gene>
<reference key="1">
    <citation type="journal article" date="2002" name="Nucleic Acids Res.">
        <title>Genome sequence of Shigella flexneri 2a: insights into pathogenicity through comparison with genomes of Escherichia coli K12 and O157.</title>
        <authorList>
            <person name="Jin Q."/>
            <person name="Yuan Z."/>
            <person name="Xu J."/>
            <person name="Wang Y."/>
            <person name="Shen Y."/>
            <person name="Lu W."/>
            <person name="Wang J."/>
            <person name="Liu H."/>
            <person name="Yang J."/>
            <person name="Yang F."/>
            <person name="Zhang X."/>
            <person name="Zhang J."/>
            <person name="Yang G."/>
            <person name="Wu H."/>
            <person name="Qu D."/>
            <person name="Dong J."/>
            <person name="Sun L."/>
            <person name="Xue Y."/>
            <person name="Zhao A."/>
            <person name="Gao Y."/>
            <person name="Zhu J."/>
            <person name="Kan B."/>
            <person name="Ding K."/>
            <person name="Chen S."/>
            <person name="Cheng H."/>
            <person name="Yao Z."/>
            <person name="He B."/>
            <person name="Chen R."/>
            <person name="Ma D."/>
            <person name="Qiang B."/>
            <person name="Wen Y."/>
            <person name="Hou Y."/>
            <person name="Yu J."/>
        </authorList>
    </citation>
    <scope>NUCLEOTIDE SEQUENCE [LARGE SCALE GENOMIC DNA]</scope>
    <source>
        <strain>301 / Serotype 2a</strain>
    </source>
</reference>
<reference key="2">
    <citation type="journal article" date="2003" name="Infect. Immun.">
        <title>Complete genome sequence and comparative genomics of Shigella flexneri serotype 2a strain 2457T.</title>
        <authorList>
            <person name="Wei J."/>
            <person name="Goldberg M.B."/>
            <person name="Burland V."/>
            <person name="Venkatesan M.M."/>
            <person name="Deng W."/>
            <person name="Fournier G."/>
            <person name="Mayhew G.F."/>
            <person name="Plunkett G. III"/>
            <person name="Rose D.J."/>
            <person name="Darling A."/>
            <person name="Mau B."/>
            <person name="Perna N.T."/>
            <person name="Payne S.M."/>
            <person name="Runyen-Janecky L.J."/>
            <person name="Zhou S."/>
            <person name="Schwartz D.C."/>
            <person name="Blattner F.R."/>
        </authorList>
    </citation>
    <scope>NUCLEOTIDE SEQUENCE [LARGE SCALE GENOMIC DNA]</scope>
    <source>
        <strain>ATCC 700930 / 2457T / Serotype 2a</strain>
    </source>
</reference>
<protein>
    <recommendedName>
        <fullName evidence="1">Large ribosomal subunit protein uL23</fullName>
    </recommendedName>
    <alternativeName>
        <fullName evidence="2">50S ribosomal protein L23</fullName>
    </alternativeName>
</protein>
<evidence type="ECO:0000255" key="1">
    <source>
        <dbReference type="HAMAP-Rule" id="MF_01369"/>
    </source>
</evidence>
<evidence type="ECO:0000305" key="2"/>
<name>RL23_SHIFL</name>
<accession>P0ADZ3</accession>
<accession>P02424</accession>
<organism>
    <name type="scientific">Shigella flexneri</name>
    <dbReference type="NCBI Taxonomy" id="623"/>
    <lineage>
        <taxon>Bacteria</taxon>
        <taxon>Pseudomonadati</taxon>
        <taxon>Pseudomonadota</taxon>
        <taxon>Gammaproteobacteria</taxon>
        <taxon>Enterobacterales</taxon>
        <taxon>Enterobacteriaceae</taxon>
        <taxon>Shigella</taxon>
    </lineage>
</organism>
<sequence>MIREERLLKVLRAPHVSEKASTAMEKSNTIVLKVAKDATKAEIKAAVQKLFEVEVEVVNTLVVKGKVKRHGQRIGRRSDWKKAYVTLKEGQNLDFVGGAE</sequence>
<comment type="function">
    <text evidence="1">One of the early assembly proteins it binds 23S rRNA. One of the proteins that surrounds the polypeptide exit tunnel on the outside of the ribosome. Forms the main docking site for trigger factor binding to the ribosome.</text>
</comment>
<comment type="subunit">
    <text evidence="1">Part of the 50S ribosomal subunit. Contacts protein L29, and trigger factor when it is bound to the ribosome.</text>
</comment>
<comment type="similarity">
    <text evidence="1">Belongs to the universal ribosomal protein uL23 family.</text>
</comment>
<dbReference type="EMBL" id="AE005674">
    <property type="protein sequence ID" value="AAN44813.1"/>
    <property type="molecule type" value="Genomic_DNA"/>
</dbReference>
<dbReference type="EMBL" id="AE014073">
    <property type="protein sequence ID" value="AAP19363.1"/>
    <property type="molecule type" value="Genomic_DNA"/>
</dbReference>
<dbReference type="RefSeq" id="NP_709106.1">
    <property type="nucleotide sequence ID" value="NC_004337.2"/>
</dbReference>
<dbReference type="RefSeq" id="WP_000617544.1">
    <property type="nucleotide sequence ID" value="NZ_WPGW01000088.1"/>
</dbReference>
<dbReference type="SMR" id="P0ADZ3"/>
<dbReference type="STRING" id="198214.SF3350"/>
<dbReference type="PaxDb" id="198214-SF3350"/>
<dbReference type="GeneID" id="1026994"/>
<dbReference type="GeneID" id="93778669"/>
<dbReference type="KEGG" id="sfl:SF3350"/>
<dbReference type="KEGG" id="sfx:S4412"/>
<dbReference type="PATRIC" id="fig|198214.7.peg.3959"/>
<dbReference type="HOGENOM" id="CLU_037562_3_1_6"/>
<dbReference type="Proteomes" id="UP000001006">
    <property type="component" value="Chromosome"/>
</dbReference>
<dbReference type="Proteomes" id="UP000002673">
    <property type="component" value="Chromosome"/>
</dbReference>
<dbReference type="GO" id="GO:1990904">
    <property type="term" value="C:ribonucleoprotein complex"/>
    <property type="evidence" value="ECO:0007669"/>
    <property type="project" value="UniProtKB-KW"/>
</dbReference>
<dbReference type="GO" id="GO:0005840">
    <property type="term" value="C:ribosome"/>
    <property type="evidence" value="ECO:0007669"/>
    <property type="project" value="UniProtKB-KW"/>
</dbReference>
<dbReference type="GO" id="GO:0019843">
    <property type="term" value="F:rRNA binding"/>
    <property type="evidence" value="ECO:0007669"/>
    <property type="project" value="UniProtKB-UniRule"/>
</dbReference>
<dbReference type="GO" id="GO:0003735">
    <property type="term" value="F:structural constituent of ribosome"/>
    <property type="evidence" value="ECO:0007669"/>
    <property type="project" value="InterPro"/>
</dbReference>
<dbReference type="GO" id="GO:0006412">
    <property type="term" value="P:translation"/>
    <property type="evidence" value="ECO:0007669"/>
    <property type="project" value="UniProtKB-UniRule"/>
</dbReference>
<dbReference type="FunFam" id="3.30.70.330:FF:000001">
    <property type="entry name" value="50S ribosomal protein L23"/>
    <property type="match status" value="1"/>
</dbReference>
<dbReference type="Gene3D" id="3.30.70.330">
    <property type="match status" value="1"/>
</dbReference>
<dbReference type="HAMAP" id="MF_01369_B">
    <property type="entry name" value="Ribosomal_uL23_B"/>
    <property type="match status" value="1"/>
</dbReference>
<dbReference type="InterPro" id="IPR012677">
    <property type="entry name" value="Nucleotide-bd_a/b_plait_sf"/>
</dbReference>
<dbReference type="InterPro" id="IPR013025">
    <property type="entry name" value="Ribosomal_uL23-like"/>
</dbReference>
<dbReference type="InterPro" id="IPR012678">
    <property type="entry name" value="Ribosomal_uL23/eL15/eS24_sf"/>
</dbReference>
<dbReference type="InterPro" id="IPR001014">
    <property type="entry name" value="Ribosomal_uL23_CS"/>
</dbReference>
<dbReference type="NCBIfam" id="NF004358">
    <property type="entry name" value="PRK05738.1-1"/>
    <property type="match status" value="1"/>
</dbReference>
<dbReference type="NCBIfam" id="NF004359">
    <property type="entry name" value="PRK05738.1-3"/>
    <property type="match status" value="1"/>
</dbReference>
<dbReference type="NCBIfam" id="NF004363">
    <property type="entry name" value="PRK05738.2-4"/>
    <property type="match status" value="1"/>
</dbReference>
<dbReference type="PANTHER" id="PTHR11620">
    <property type="entry name" value="60S RIBOSOMAL PROTEIN L23A"/>
    <property type="match status" value="1"/>
</dbReference>
<dbReference type="Pfam" id="PF00276">
    <property type="entry name" value="Ribosomal_L23"/>
    <property type="match status" value="1"/>
</dbReference>
<dbReference type="SUPFAM" id="SSF54189">
    <property type="entry name" value="Ribosomal proteins S24e, L23 and L15e"/>
    <property type="match status" value="1"/>
</dbReference>
<dbReference type="PROSITE" id="PS00050">
    <property type="entry name" value="RIBOSOMAL_L23"/>
    <property type="match status" value="1"/>
</dbReference>
<keyword id="KW-1185">Reference proteome</keyword>
<keyword id="KW-0687">Ribonucleoprotein</keyword>
<keyword id="KW-0689">Ribosomal protein</keyword>
<keyword id="KW-0694">RNA-binding</keyword>
<keyword id="KW-0699">rRNA-binding</keyword>
<feature type="chain" id="PRO_0000129423" description="Large ribosomal subunit protein uL23">
    <location>
        <begin position="1"/>
        <end position="100"/>
    </location>
</feature>
<proteinExistence type="inferred from homology"/>